<protein>
    <recommendedName>
        <fullName evidence="1">Adenylate kinase</fullName>
        <shortName evidence="1">AK</shortName>
        <ecNumber evidence="1">2.7.4.3</ecNumber>
    </recommendedName>
    <alternativeName>
        <fullName evidence="1">ATP-AMP transphosphorylase</fullName>
    </alternativeName>
    <alternativeName>
        <fullName evidence="1">ATP:AMP phosphotransferase</fullName>
    </alternativeName>
    <alternativeName>
        <fullName evidence="1">Adenylate monophosphate kinase</fullName>
    </alternativeName>
</protein>
<reference key="1">
    <citation type="journal article" date="2004" name="Proc. Natl. Acad. Sci. U.S.A.">
        <title>Genomic analysis of Bacteroides fragilis reveals extensive DNA inversions regulating cell surface adaptation.</title>
        <authorList>
            <person name="Kuwahara T."/>
            <person name="Yamashita A."/>
            <person name="Hirakawa H."/>
            <person name="Nakayama H."/>
            <person name="Toh H."/>
            <person name="Okada N."/>
            <person name="Kuhara S."/>
            <person name="Hattori M."/>
            <person name="Hayashi T."/>
            <person name="Ohnishi Y."/>
        </authorList>
    </citation>
    <scope>NUCLEOTIDE SEQUENCE [LARGE SCALE GENOMIC DNA]</scope>
    <source>
        <strain>YCH46</strain>
    </source>
</reference>
<accession>Q64XA6</accession>
<sequence>MLNIVIFGAPGSGKGTQSERIVEKYGINHISTGDVLRAEIKNGTELGKTAKGYIDQGQLIPDELMVDILASVFDSFKDSKGVIFDGFPRTIPQAEALKVMLKERGQDISVMLDLDVPEEELMTRLIKRGKESGRADDNEETIKKRLVVYNTQTSPLKEYYKGEGKYQHINGLGTMEGIFEDICKAVDTL</sequence>
<gene>
    <name evidence="1" type="primary">adk</name>
    <name type="ordered locus">BF1120</name>
</gene>
<keyword id="KW-0067">ATP-binding</keyword>
<keyword id="KW-0963">Cytoplasm</keyword>
<keyword id="KW-0418">Kinase</keyword>
<keyword id="KW-0545">Nucleotide biosynthesis</keyword>
<keyword id="KW-0547">Nucleotide-binding</keyword>
<keyword id="KW-0808">Transferase</keyword>
<proteinExistence type="inferred from homology"/>
<name>KAD_BACFR</name>
<comment type="function">
    <text evidence="1">Catalyzes the reversible transfer of the terminal phosphate group between ATP and AMP. Plays an important role in cellular energy homeostasis and in adenine nucleotide metabolism.</text>
</comment>
<comment type="catalytic activity">
    <reaction evidence="1">
        <text>AMP + ATP = 2 ADP</text>
        <dbReference type="Rhea" id="RHEA:12973"/>
        <dbReference type="ChEBI" id="CHEBI:30616"/>
        <dbReference type="ChEBI" id="CHEBI:456215"/>
        <dbReference type="ChEBI" id="CHEBI:456216"/>
        <dbReference type="EC" id="2.7.4.3"/>
    </reaction>
</comment>
<comment type="pathway">
    <text evidence="1">Purine metabolism; AMP biosynthesis via salvage pathway; AMP from ADP: step 1/1.</text>
</comment>
<comment type="subunit">
    <text evidence="1">Monomer.</text>
</comment>
<comment type="subcellular location">
    <subcellularLocation>
        <location evidence="1">Cytoplasm</location>
    </subcellularLocation>
</comment>
<comment type="domain">
    <text evidence="1">Consists of three domains, a large central CORE domain and two small peripheral domains, NMPbind and LID, which undergo movements during catalysis. The LID domain closes over the site of phosphoryl transfer upon ATP binding. Assembling and dissambling the active center during each catalytic cycle provides an effective means to prevent ATP hydrolysis.</text>
</comment>
<comment type="similarity">
    <text evidence="1">Belongs to the adenylate kinase family.</text>
</comment>
<organism>
    <name type="scientific">Bacteroides fragilis (strain YCH46)</name>
    <dbReference type="NCBI Taxonomy" id="295405"/>
    <lineage>
        <taxon>Bacteria</taxon>
        <taxon>Pseudomonadati</taxon>
        <taxon>Bacteroidota</taxon>
        <taxon>Bacteroidia</taxon>
        <taxon>Bacteroidales</taxon>
        <taxon>Bacteroidaceae</taxon>
        <taxon>Bacteroides</taxon>
    </lineage>
</organism>
<dbReference type="EC" id="2.7.4.3" evidence="1"/>
<dbReference type="EMBL" id="AP006841">
    <property type="protein sequence ID" value="BAD47870.1"/>
    <property type="molecule type" value="Genomic_DNA"/>
</dbReference>
<dbReference type="RefSeq" id="WP_005785533.1">
    <property type="nucleotide sequence ID" value="NZ_UYXF01000021.1"/>
</dbReference>
<dbReference type="RefSeq" id="YP_098404.1">
    <property type="nucleotide sequence ID" value="NC_006347.1"/>
</dbReference>
<dbReference type="SMR" id="Q64XA6"/>
<dbReference type="STRING" id="295405.BF1120"/>
<dbReference type="KEGG" id="bfr:BF1120"/>
<dbReference type="PATRIC" id="fig|295405.11.peg.1109"/>
<dbReference type="HOGENOM" id="CLU_032354_4_1_10"/>
<dbReference type="OrthoDB" id="9805030at2"/>
<dbReference type="UniPathway" id="UPA00588">
    <property type="reaction ID" value="UER00649"/>
</dbReference>
<dbReference type="Proteomes" id="UP000002197">
    <property type="component" value="Chromosome"/>
</dbReference>
<dbReference type="GO" id="GO:0005737">
    <property type="term" value="C:cytoplasm"/>
    <property type="evidence" value="ECO:0007669"/>
    <property type="project" value="UniProtKB-SubCell"/>
</dbReference>
<dbReference type="GO" id="GO:0004017">
    <property type="term" value="F:adenylate kinase activity"/>
    <property type="evidence" value="ECO:0007669"/>
    <property type="project" value="UniProtKB-UniRule"/>
</dbReference>
<dbReference type="GO" id="GO:0005524">
    <property type="term" value="F:ATP binding"/>
    <property type="evidence" value="ECO:0007669"/>
    <property type="project" value="UniProtKB-UniRule"/>
</dbReference>
<dbReference type="GO" id="GO:0044209">
    <property type="term" value="P:AMP salvage"/>
    <property type="evidence" value="ECO:0007669"/>
    <property type="project" value="UniProtKB-UniRule"/>
</dbReference>
<dbReference type="CDD" id="cd01428">
    <property type="entry name" value="ADK"/>
    <property type="match status" value="1"/>
</dbReference>
<dbReference type="Gene3D" id="3.40.50.300">
    <property type="entry name" value="P-loop containing nucleotide triphosphate hydrolases"/>
    <property type="match status" value="1"/>
</dbReference>
<dbReference type="HAMAP" id="MF_00235">
    <property type="entry name" value="Adenylate_kinase_Adk"/>
    <property type="match status" value="1"/>
</dbReference>
<dbReference type="InterPro" id="IPR000850">
    <property type="entry name" value="Adenylat/UMP-CMP_kin"/>
</dbReference>
<dbReference type="InterPro" id="IPR033690">
    <property type="entry name" value="Adenylat_kinase_CS"/>
</dbReference>
<dbReference type="InterPro" id="IPR027417">
    <property type="entry name" value="P-loop_NTPase"/>
</dbReference>
<dbReference type="NCBIfam" id="NF001381">
    <property type="entry name" value="PRK00279.1-3"/>
    <property type="match status" value="1"/>
</dbReference>
<dbReference type="NCBIfam" id="NF011100">
    <property type="entry name" value="PRK14527.1"/>
    <property type="match status" value="1"/>
</dbReference>
<dbReference type="NCBIfam" id="NF011101">
    <property type="entry name" value="PRK14528.1"/>
    <property type="match status" value="1"/>
</dbReference>
<dbReference type="NCBIfam" id="NF011104">
    <property type="entry name" value="PRK14531.1"/>
    <property type="match status" value="1"/>
</dbReference>
<dbReference type="NCBIfam" id="NF011105">
    <property type="entry name" value="PRK14532.1"/>
    <property type="match status" value="1"/>
</dbReference>
<dbReference type="PANTHER" id="PTHR23359">
    <property type="entry name" value="NUCLEOTIDE KINASE"/>
    <property type="match status" value="1"/>
</dbReference>
<dbReference type="Pfam" id="PF00406">
    <property type="entry name" value="ADK"/>
    <property type="match status" value="1"/>
</dbReference>
<dbReference type="PRINTS" id="PR00094">
    <property type="entry name" value="ADENYLTKNASE"/>
</dbReference>
<dbReference type="SUPFAM" id="SSF52540">
    <property type="entry name" value="P-loop containing nucleoside triphosphate hydrolases"/>
    <property type="match status" value="1"/>
</dbReference>
<dbReference type="PROSITE" id="PS00113">
    <property type="entry name" value="ADENYLATE_KINASE"/>
    <property type="match status" value="1"/>
</dbReference>
<feature type="chain" id="PRO_0000158723" description="Adenylate kinase">
    <location>
        <begin position="1"/>
        <end position="189"/>
    </location>
</feature>
<feature type="region of interest" description="NMP" evidence="1">
    <location>
        <begin position="31"/>
        <end position="60"/>
    </location>
</feature>
<feature type="region of interest" description="LID" evidence="1">
    <location>
        <begin position="127"/>
        <end position="137"/>
    </location>
</feature>
<feature type="binding site" evidence="1">
    <location>
        <begin position="11"/>
        <end position="16"/>
    </location>
    <ligand>
        <name>ATP</name>
        <dbReference type="ChEBI" id="CHEBI:30616"/>
    </ligand>
</feature>
<feature type="binding site" evidence="1">
    <location>
        <position position="32"/>
    </location>
    <ligand>
        <name>AMP</name>
        <dbReference type="ChEBI" id="CHEBI:456215"/>
    </ligand>
</feature>
<feature type="binding site" evidence="1">
    <location>
        <position position="37"/>
    </location>
    <ligand>
        <name>AMP</name>
        <dbReference type="ChEBI" id="CHEBI:456215"/>
    </ligand>
</feature>
<feature type="binding site" evidence="1">
    <location>
        <begin position="58"/>
        <end position="60"/>
    </location>
    <ligand>
        <name>AMP</name>
        <dbReference type="ChEBI" id="CHEBI:456215"/>
    </ligand>
</feature>
<feature type="binding site" evidence="1">
    <location>
        <begin position="86"/>
        <end position="89"/>
    </location>
    <ligand>
        <name>AMP</name>
        <dbReference type="ChEBI" id="CHEBI:456215"/>
    </ligand>
</feature>
<feature type="binding site" evidence="1">
    <location>
        <position position="93"/>
    </location>
    <ligand>
        <name>AMP</name>
        <dbReference type="ChEBI" id="CHEBI:456215"/>
    </ligand>
</feature>
<feature type="binding site" evidence="1">
    <location>
        <position position="128"/>
    </location>
    <ligand>
        <name>ATP</name>
        <dbReference type="ChEBI" id="CHEBI:30616"/>
    </ligand>
</feature>
<feature type="binding site" evidence="1">
    <location>
        <position position="134"/>
    </location>
    <ligand>
        <name>AMP</name>
        <dbReference type="ChEBI" id="CHEBI:456215"/>
    </ligand>
</feature>
<feature type="binding site" evidence="1">
    <location>
        <position position="145"/>
    </location>
    <ligand>
        <name>AMP</name>
        <dbReference type="ChEBI" id="CHEBI:456215"/>
    </ligand>
</feature>
<feature type="binding site" evidence="1">
    <location>
        <position position="173"/>
    </location>
    <ligand>
        <name>ATP</name>
        <dbReference type="ChEBI" id="CHEBI:30616"/>
    </ligand>
</feature>
<evidence type="ECO:0000255" key="1">
    <source>
        <dbReference type="HAMAP-Rule" id="MF_00235"/>
    </source>
</evidence>